<comment type="function">
    <text evidence="1">Nucleotide-binding protein.</text>
</comment>
<comment type="similarity">
    <text evidence="1">Belongs to the YajQ family.</text>
</comment>
<sequence length="163" mass="18541">MPSLDVVSTVDMQAMDNAVNNAKRDLGNRYDFKNSKYELELNRKDKAIEIVAEDEFKLKAVIETLIQQCVRFKLDSKCLDIADSHTVSLGAAKTEIKIKDGLTKETASKITKFIKSTKLKLDSAIQGEQIRITGKQIDDLQEIMRLLSEQDFDVPLQYVNMKR</sequence>
<dbReference type="EMBL" id="CP000688">
    <property type="protein sequence ID" value="ABQ17705.1"/>
    <property type="molecule type" value="Genomic_DNA"/>
</dbReference>
<dbReference type="SMR" id="A5FQ25"/>
<dbReference type="KEGG" id="deb:DehaBAV1_1126"/>
<dbReference type="PATRIC" id="fig|216389.18.peg.1188"/>
<dbReference type="HOGENOM" id="CLU_099839_1_0_0"/>
<dbReference type="GO" id="GO:0005829">
    <property type="term" value="C:cytosol"/>
    <property type="evidence" value="ECO:0007669"/>
    <property type="project" value="TreeGrafter"/>
</dbReference>
<dbReference type="GO" id="GO:0000166">
    <property type="term" value="F:nucleotide binding"/>
    <property type="evidence" value="ECO:0007669"/>
    <property type="project" value="TreeGrafter"/>
</dbReference>
<dbReference type="CDD" id="cd11740">
    <property type="entry name" value="YajQ_like"/>
    <property type="match status" value="1"/>
</dbReference>
<dbReference type="Gene3D" id="3.30.70.860">
    <property type="match status" value="1"/>
</dbReference>
<dbReference type="Gene3D" id="3.30.70.990">
    <property type="entry name" value="YajQ-like, domain 2"/>
    <property type="match status" value="1"/>
</dbReference>
<dbReference type="HAMAP" id="MF_00632">
    <property type="entry name" value="YajQ"/>
    <property type="match status" value="1"/>
</dbReference>
<dbReference type="InterPro" id="IPR007551">
    <property type="entry name" value="DUF520"/>
</dbReference>
<dbReference type="InterPro" id="IPR035571">
    <property type="entry name" value="UPF0234-like_C"/>
</dbReference>
<dbReference type="InterPro" id="IPR035570">
    <property type="entry name" value="UPF0234_N"/>
</dbReference>
<dbReference type="InterPro" id="IPR036183">
    <property type="entry name" value="YajQ-like_sf"/>
</dbReference>
<dbReference type="NCBIfam" id="NF003819">
    <property type="entry name" value="PRK05412.1"/>
    <property type="match status" value="1"/>
</dbReference>
<dbReference type="PANTHER" id="PTHR30476">
    <property type="entry name" value="UPF0234 PROTEIN YAJQ"/>
    <property type="match status" value="1"/>
</dbReference>
<dbReference type="PANTHER" id="PTHR30476:SF0">
    <property type="entry name" value="UPF0234 PROTEIN YAJQ"/>
    <property type="match status" value="1"/>
</dbReference>
<dbReference type="Pfam" id="PF04461">
    <property type="entry name" value="DUF520"/>
    <property type="match status" value="1"/>
</dbReference>
<dbReference type="SUPFAM" id="SSF89963">
    <property type="entry name" value="YajQ-like"/>
    <property type="match status" value="2"/>
</dbReference>
<evidence type="ECO:0000255" key="1">
    <source>
        <dbReference type="HAMAP-Rule" id="MF_00632"/>
    </source>
</evidence>
<organism>
    <name type="scientific">Dehalococcoides mccartyi (strain ATCC BAA-2100 / JCM 16839 / KCTC 5957 / BAV1)</name>
    <dbReference type="NCBI Taxonomy" id="216389"/>
    <lineage>
        <taxon>Bacteria</taxon>
        <taxon>Bacillati</taxon>
        <taxon>Chloroflexota</taxon>
        <taxon>Dehalococcoidia</taxon>
        <taxon>Dehalococcoidales</taxon>
        <taxon>Dehalococcoidaceae</taxon>
        <taxon>Dehalococcoides</taxon>
    </lineage>
</organism>
<proteinExistence type="inferred from homology"/>
<reference key="1">
    <citation type="submission" date="2007-05" db="EMBL/GenBank/DDBJ databases">
        <title>Complete sequence of Dehalococcoides sp. BAV1.</title>
        <authorList>
            <consortium name="US DOE Joint Genome Institute"/>
            <person name="Copeland A."/>
            <person name="Lucas S."/>
            <person name="Lapidus A."/>
            <person name="Barry K."/>
            <person name="Detter J.C."/>
            <person name="Glavina del Rio T."/>
            <person name="Hammon N."/>
            <person name="Israni S."/>
            <person name="Pitluck S."/>
            <person name="Lowry S."/>
            <person name="Clum A."/>
            <person name="Schmutz J."/>
            <person name="Larimer F."/>
            <person name="Land M."/>
            <person name="Hauser L."/>
            <person name="Kyrpides N."/>
            <person name="Kim E."/>
            <person name="Ritalahti K.M."/>
            <person name="Loeffler F."/>
            <person name="Richardson P."/>
        </authorList>
    </citation>
    <scope>NUCLEOTIDE SEQUENCE [LARGE SCALE GENOMIC DNA]</scope>
    <source>
        <strain>ATCC BAA-2100 / JCM 16839 / KCTC 5957 / BAV1</strain>
    </source>
</reference>
<keyword id="KW-0547">Nucleotide-binding</keyword>
<protein>
    <recommendedName>
        <fullName evidence="1">Nucleotide-binding protein DehaBAV1_1126</fullName>
    </recommendedName>
</protein>
<accession>A5FQ25</accession>
<gene>
    <name type="ordered locus">DehaBAV1_1126</name>
</gene>
<name>Y1126_DEHMB</name>
<feature type="chain" id="PRO_1000147299" description="Nucleotide-binding protein DehaBAV1_1126">
    <location>
        <begin position="1"/>
        <end position="163"/>
    </location>
</feature>